<dbReference type="EMBL" id="CP000939">
    <property type="protein sequence ID" value="ACA43451.1"/>
    <property type="molecule type" value="Genomic_DNA"/>
</dbReference>
<dbReference type="RefSeq" id="WP_003405088.1">
    <property type="nucleotide sequence ID" value="NC_010516.1"/>
</dbReference>
<dbReference type="SMR" id="B1IJL2"/>
<dbReference type="KEGG" id="cbb:CLD_1956"/>
<dbReference type="HOGENOM" id="CLU_173137_3_1_9"/>
<dbReference type="Proteomes" id="UP000008541">
    <property type="component" value="Chromosome"/>
</dbReference>
<dbReference type="GO" id="GO:0005737">
    <property type="term" value="C:cytoplasm"/>
    <property type="evidence" value="ECO:0007669"/>
    <property type="project" value="UniProtKB-SubCell"/>
</dbReference>
<dbReference type="Gene3D" id="1.10.287.540">
    <property type="entry name" value="Helix hairpin bin"/>
    <property type="match status" value="1"/>
</dbReference>
<dbReference type="HAMAP" id="MF_01103">
    <property type="entry name" value="UPF0291"/>
    <property type="match status" value="1"/>
</dbReference>
<dbReference type="InterPro" id="IPR009242">
    <property type="entry name" value="DUF896"/>
</dbReference>
<dbReference type="PANTHER" id="PTHR37300">
    <property type="entry name" value="UPF0291 PROTEIN CBO2609/CLC_2481"/>
    <property type="match status" value="1"/>
</dbReference>
<dbReference type="PANTHER" id="PTHR37300:SF1">
    <property type="entry name" value="UPF0291 PROTEIN YNZC"/>
    <property type="match status" value="1"/>
</dbReference>
<dbReference type="Pfam" id="PF05979">
    <property type="entry name" value="DUF896"/>
    <property type="match status" value="1"/>
</dbReference>
<dbReference type="SUPFAM" id="SSF158221">
    <property type="entry name" value="YnzC-like"/>
    <property type="match status" value="1"/>
</dbReference>
<name>Y1956_CLOBK</name>
<comment type="subcellular location">
    <subcellularLocation>
        <location evidence="1">Cytoplasm</location>
    </subcellularLocation>
</comment>
<comment type="similarity">
    <text evidence="1">Belongs to the UPF0291 family.</text>
</comment>
<sequence>MDMKKLIERINFLYKKSKEEGLTKEEKVEQQKLRREYIDIIKGNVKVQLEGVEKIPTPNRKN</sequence>
<reference key="1">
    <citation type="journal article" date="2007" name="PLoS ONE">
        <title>Analysis of the neurotoxin complex genes in Clostridium botulinum A1-A4 and B1 strains: BoNT/A3, /Ba4 and /B1 clusters are located within plasmids.</title>
        <authorList>
            <person name="Smith T.J."/>
            <person name="Hill K.K."/>
            <person name="Foley B.T."/>
            <person name="Detter J.C."/>
            <person name="Munk A.C."/>
            <person name="Bruce D.C."/>
            <person name="Doggett N.A."/>
            <person name="Smith L.A."/>
            <person name="Marks J.D."/>
            <person name="Xie G."/>
            <person name="Brettin T.S."/>
        </authorList>
    </citation>
    <scope>NUCLEOTIDE SEQUENCE [LARGE SCALE GENOMIC DNA]</scope>
    <source>
        <strain>Okra / Type B1</strain>
    </source>
</reference>
<keyword id="KW-0963">Cytoplasm</keyword>
<evidence type="ECO:0000255" key="1">
    <source>
        <dbReference type="HAMAP-Rule" id="MF_01103"/>
    </source>
</evidence>
<organism>
    <name type="scientific">Clostridium botulinum (strain Okra / Type B1)</name>
    <dbReference type="NCBI Taxonomy" id="498213"/>
    <lineage>
        <taxon>Bacteria</taxon>
        <taxon>Bacillati</taxon>
        <taxon>Bacillota</taxon>
        <taxon>Clostridia</taxon>
        <taxon>Eubacteriales</taxon>
        <taxon>Clostridiaceae</taxon>
        <taxon>Clostridium</taxon>
    </lineage>
</organism>
<gene>
    <name type="ordered locus">CLD_1956</name>
</gene>
<proteinExistence type="inferred from homology"/>
<feature type="chain" id="PRO_1000137009" description="UPF0291 protein CLD_1956">
    <location>
        <begin position="1"/>
        <end position="62"/>
    </location>
</feature>
<accession>B1IJL2</accession>
<protein>
    <recommendedName>
        <fullName evidence="1">UPF0291 protein CLD_1956</fullName>
    </recommendedName>
</protein>